<comment type="function">
    <text>Neurotrophic factor that regulates central nervous development and function. May play an important role in dopaminergic neurons in the substantia nigra.</text>
</comment>
<comment type="subunit">
    <text evidence="1">Homodimer. Interacts with FGFR2 and FGFR4. Affinity between fibroblast growth factors (FGFs) and their receptors is increased by heparan sulfate glycosaminoglycans that function as coreceptors (By similarity).</text>
</comment>
<comment type="subcellular location">
    <subcellularLocation>
        <location evidence="1">Secreted</location>
    </subcellularLocation>
</comment>
<comment type="tissue specificity">
    <text evidence="2">Preferentially expressed in brain; substantia nigra pars compacta.</text>
</comment>
<comment type="similarity">
    <text evidence="3">Belongs to the heparin-binding growth factors family.</text>
</comment>
<sequence>MAPLTEVGAFLGGLEGLGQQVGSHFLLPPAGERPPLLGERRGALERGARGGPGSVELAHLHGILRRRQLYCRTGFHLQILPDGSVQGTRQDHSLFGILEFISVAVGLVSIRGVDSGLYLGMNGKGELYGSEKLTSECIFREQFEENWYNTYSSNIYKHGDTGRRYFVALNKDGTPRDGARSKRHQKFTHFLPRPVDPERVPELYKDLLVYTG</sequence>
<gene>
    <name type="primary">Fgf20</name>
</gene>
<dbReference type="EMBL" id="AB020021">
    <property type="protein sequence ID" value="BAB13763.1"/>
    <property type="molecule type" value="mRNA"/>
</dbReference>
<dbReference type="PIR" id="JC7511">
    <property type="entry name" value="JC7511"/>
</dbReference>
<dbReference type="RefSeq" id="NP_076451.1">
    <property type="nucleotide sequence ID" value="NM_023961.2"/>
</dbReference>
<dbReference type="SMR" id="Q9EST9"/>
<dbReference type="FunCoup" id="Q9EST9">
    <property type="interactions" value="434"/>
</dbReference>
<dbReference type="STRING" id="10116.ENSRNOP00000000121"/>
<dbReference type="PhosphoSitePlus" id="Q9EST9"/>
<dbReference type="PaxDb" id="10116-ENSRNOP00000000121"/>
<dbReference type="Ensembl" id="ENSRNOT00000096927.1">
    <property type="protein sequence ID" value="ENSRNOP00000085396.1"/>
    <property type="gene ID" value="ENSRNOG00000000109.3"/>
</dbReference>
<dbReference type="GeneID" id="66017"/>
<dbReference type="KEGG" id="rno:66017"/>
<dbReference type="AGR" id="RGD:71068"/>
<dbReference type="CTD" id="26281"/>
<dbReference type="RGD" id="71068">
    <property type="gene designation" value="Fgf20"/>
</dbReference>
<dbReference type="eggNOG" id="KOG3885">
    <property type="taxonomic scope" value="Eukaryota"/>
</dbReference>
<dbReference type="GeneTree" id="ENSGT00940000158380"/>
<dbReference type="HOGENOM" id="CLU_081609_0_0_1"/>
<dbReference type="InParanoid" id="Q9EST9"/>
<dbReference type="OMA" id="NEAVKHP"/>
<dbReference type="OrthoDB" id="6158176at2759"/>
<dbReference type="PhylomeDB" id="Q9EST9"/>
<dbReference type="TreeFam" id="TF317805"/>
<dbReference type="Reactome" id="R-RNO-109704">
    <property type="pathway name" value="PI3K Cascade"/>
</dbReference>
<dbReference type="Reactome" id="R-RNO-1257604">
    <property type="pathway name" value="PIP3 activates AKT signaling"/>
</dbReference>
<dbReference type="Reactome" id="R-RNO-190322">
    <property type="pathway name" value="FGFR4 ligand binding and activation"/>
</dbReference>
<dbReference type="Reactome" id="R-RNO-190371">
    <property type="pathway name" value="FGFR3b ligand binding and activation"/>
</dbReference>
<dbReference type="Reactome" id="R-RNO-190372">
    <property type="pathway name" value="FGFR3c ligand binding and activation"/>
</dbReference>
<dbReference type="Reactome" id="R-RNO-190373">
    <property type="pathway name" value="FGFR1c ligand binding and activation"/>
</dbReference>
<dbReference type="Reactome" id="R-RNO-190375">
    <property type="pathway name" value="FGFR2c ligand binding and activation"/>
</dbReference>
<dbReference type="Reactome" id="R-RNO-5654219">
    <property type="pathway name" value="Phospholipase C-mediated cascade: FGFR1"/>
</dbReference>
<dbReference type="Reactome" id="R-RNO-5654221">
    <property type="pathway name" value="Phospholipase C-mediated cascade, FGFR2"/>
</dbReference>
<dbReference type="Reactome" id="R-RNO-5654227">
    <property type="pathway name" value="Phospholipase C-mediated cascade, FGFR3"/>
</dbReference>
<dbReference type="Reactome" id="R-RNO-5654228">
    <property type="pathway name" value="Phospholipase C-mediated cascade, FGFR4"/>
</dbReference>
<dbReference type="Reactome" id="R-RNO-5654687">
    <property type="pathway name" value="Downstream signaling of activated FGFR1"/>
</dbReference>
<dbReference type="Reactome" id="R-RNO-5654688">
    <property type="pathway name" value="SHC-mediated cascade:FGFR1"/>
</dbReference>
<dbReference type="Reactome" id="R-RNO-5654689">
    <property type="pathway name" value="PI-3K cascade:FGFR1"/>
</dbReference>
<dbReference type="Reactome" id="R-RNO-5654693">
    <property type="pathway name" value="FRS-mediated FGFR1 signaling"/>
</dbReference>
<dbReference type="Reactome" id="R-RNO-5654695">
    <property type="pathway name" value="PI-3K cascade:FGFR2"/>
</dbReference>
<dbReference type="Reactome" id="R-RNO-5654699">
    <property type="pathway name" value="SHC-mediated cascade:FGFR2"/>
</dbReference>
<dbReference type="Reactome" id="R-RNO-5654700">
    <property type="pathway name" value="FRS-mediated FGFR2 signaling"/>
</dbReference>
<dbReference type="Reactome" id="R-RNO-5654704">
    <property type="pathway name" value="SHC-mediated cascade:FGFR3"/>
</dbReference>
<dbReference type="Reactome" id="R-RNO-5654706">
    <property type="pathway name" value="FRS-mediated FGFR3 signaling"/>
</dbReference>
<dbReference type="Reactome" id="R-RNO-5654710">
    <property type="pathway name" value="PI-3K cascade:FGFR3"/>
</dbReference>
<dbReference type="Reactome" id="R-RNO-5654712">
    <property type="pathway name" value="FRS-mediated FGFR4 signaling"/>
</dbReference>
<dbReference type="Reactome" id="R-RNO-5654719">
    <property type="pathway name" value="SHC-mediated cascade:FGFR4"/>
</dbReference>
<dbReference type="Reactome" id="R-RNO-5654720">
    <property type="pathway name" value="PI-3K cascade:FGFR4"/>
</dbReference>
<dbReference type="Reactome" id="R-RNO-5654726">
    <property type="pathway name" value="Negative regulation of FGFR1 signaling"/>
</dbReference>
<dbReference type="Reactome" id="R-RNO-5654727">
    <property type="pathway name" value="Negative regulation of FGFR2 signaling"/>
</dbReference>
<dbReference type="Reactome" id="R-RNO-5654732">
    <property type="pathway name" value="Negative regulation of FGFR3 signaling"/>
</dbReference>
<dbReference type="Reactome" id="R-RNO-5654733">
    <property type="pathway name" value="Negative regulation of FGFR4 signaling"/>
</dbReference>
<dbReference type="Reactome" id="R-RNO-5673001">
    <property type="pathway name" value="RAF/MAP kinase cascade"/>
</dbReference>
<dbReference type="Reactome" id="R-RNO-6811558">
    <property type="pathway name" value="PI5P, PP2A and IER3 Regulate PI3K/AKT Signaling"/>
</dbReference>
<dbReference type="PRO" id="PR:Q9EST9"/>
<dbReference type="Proteomes" id="UP000002494">
    <property type="component" value="Chromosome 16"/>
</dbReference>
<dbReference type="Bgee" id="ENSRNOG00000000109">
    <property type="expression patterns" value="Expressed in cerebellum"/>
</dbReference>
<dbReference type="GO" id="GO:0005737">
    <property type="term" value="C:cytoplasm"/>
    <property type="evidence" value="ECO:0000318"/>
    <property type="project" value="GO_Central"/>
</dbReference>
<dbReference type="GO" id="GO:0005615">
    <property type="term" value="C:extracellular space"/>
    <property type="evidence" value="ECO:0000318"/>
    <property type="project" value="GO_Central"/>
</dbReference>
<dbReference type="GO" id="GO:0005104">
    <property type="term" value="F:fibroblast growth factor receptor binding"/>
    <property type="evidence" value="ECO:0000316"/>
    <property type="project" value="MGI"/>
</dbReference>
<dbReference type="GO" id="GO:0008083">
    <property type="term" value="F:growth factor activity"/>
    <property type="evidence" value="ECO:0000314"/>
    <property type="project" value="ParkinsonsUK-UCL"/>
</dbReference>
<dbReference type="GO" id="GO:0090722">
    <property type="term" value="F:receptor-receptor interaction"/>
    <property type="evidence" value="ECO:0000266"/>
    <property type="project" value="RGD"/>
</dbReference>
<dbReference type="GO" id="GO:0030154">
    <property type="term" value="P:cell differentiation"/>
    <property type="evidence" value="ECO:0000266"/>
    <property type="project" value="RGD"/>
</dbReference>
<dbReference type="GO" id="GO:0008543">
    <property type="term" value="P:fibroblast growth factor receptor signaling pathway"/>
    <property type="evidence" value="ECO:0000314"/>
    <property type="project" value="MGI"/>
</dbReference>
<dbReference type="GO" id="GO:0042491">
    <property type="term" value="P:inner ear auditory receptor cell differentiation"/>
    <property type="evidence" value="ECO:0000266"/>
    <property type="project" value="RGD"/>
</dbReference>
<dbReference type="GO" id="GO:0043524">
    <property type="term" value="P:negative regulation of neuron apoptotic process"/>
    <property type="evidence" value="ECO:0000266"/>
    <property type="project" value="RGD"/>
</dbReference>
<dbReference type="GO" id="GO:0022008">
    <property type="term" value="P:neurogenesis"/>
    <property type="evidence" value="ECO:0000318"/>
    <property type="project" value="GO_Central"/>
</dbReference>
<dbReference type="GO" id="GO:0008284">
    <property type="term" value="P:positive regulation of cell population proliferation"/>
    <property type="evidence" value="ECO:0000314"/>
    <property type="project" value="MGI"/>
</dbReference>
<dbReference type="GO" id="GO:0070374">
    <property type="term" value="P:positive regulation of ERK1 and ERK2 cascade"/>
    <property type="evidence" value="ECO:0000314"/>
    <property type="project" value="MGI"/>
</dbReference>
<dbReference type="GO" id="GO:0043410">
    <property type="term" value="P:positive regulation of MAPK cascade"/>
    <property type="evidence" value="ECO:0000318"/>
    <property type="project" value="GO_Central"/>
</dbReference>
<dbReference type="GO" id="GO:0060043">
    <property type="term" value="P:regulation of cardiac muscle cell proliferation"/>
    <property type="evidence" value="ECO:0000266"/>
    <property type="project" value="RGD"/>
</dbReference>
<dbReference type="GO" id="GO:0030334">
    <property type="term" value="P:regulation of cell migration"/>
    <property type="evidence" value="ECO:0000318"/>
    <property type="project" value="GO_Central"/>
</dbReference>
<dbReference type="GO" id="GO:0045664">
    <property type="term" value="P:regulation of neuron differentiation"/>
    <property type="evidence" value="ECO:0000266"/>
    <property type="project" value="RGD"/>
</dbReference>
<dbReference type="FunFam" id="2.80.10.50:FF:000004">
    <property type="entry name" value="Fibroblast growth factor"/>
    <property type="match status" value="1"/>
</dbReference>
<dbReference type="Gene3D" id="2.80.10.50">
    <property type="match status" value="1"/>
</dbReference>
<dbReference type="InterPro" id="IPR002209">
    <property type="entry name" value="Fibroblast_GF_fam"/>
</dbReference>
<dbReference type="InterPro" id="IPR008996">
    <property type="entry name" value="IL1/FGF"/>
</dbReference>
<dbReference type="PANTHER" id="PTHR11486">
    <property type="entry name" value="FIBROBLAST GROWTH FACTOR"/>
    <property type="match status" value="1"/>
</dbReference>
<dbReference type="Pfam" id="PF00167">
    <property type="entry name" value="FGF"/>
    <property type="match status" value="1"/>
</dbReference>
<dbReference type="PRINTS" id="PR00263">
    <property type="entry name" value="HBGFFGF"/>
</dbReference>
<dbReference type="PRINTS" id="PR00262">
    <property type="entry name" value="IL1HBGF"/>
</dbReference>
<dbReference type="SMART" id="SM00442">
    <property type="entry name" value="FGF"/>
    <property type="match status" value="1"/>
</dbReference>
<dbReference type="SUPFAM" id="SSF50353">
    <property type="entry name" value="Cytokine"/>
    <property type="match status" value="1"/>
</dbReference>
<dbReference type="PROSITE" id="PS00247">
    <property type="entry name" value="HBGF_FGF"/>
    <property type="match status" value="1"/>
</dbReference>
<reference key="1">
    <citation type="journal article" date="2000" name="Biochem. Biophys. Res. Commun.">
        <title>FGF-20, a novel neurotrophic factor, preferentially expressed in the substantia nigra pars compacta of rat brain.</title>
        <authorList>
            <person name="Ohmachi S."/>
            <person name="Watanabe Y."/>
            <person name="Mikami T."/>
            <person name="Kusu N."/>
            <person name="Ibi T."/>
            <person name="Akaike A."/>
            <person name="Itoh N."/>
        </authorList>
    </citation>
    <scope>NUCLEOTIDE SEQUENCE [MRNA]</scope>
    <scope>TISSUE SPECIFICITY</scope>
    <source>
        <tissue>Brain</tissue>
    </source>
</reference>
<evidence type="ECO:0000250" key="1"/>
<evidence type="ECO:0000269" key="2">
    <source>
    </source>
</evidence>
<evidence type="ECO:0000305" key="3"/>
<accession>Q9EST9</accession>
<protein>
    <recommendedName>
        <fullName>Fibroblast growth factor 20</fullName>
        <shortName>FGF-20</shortName>
    </recommendedName>
</protein>
<feature type="chain" id="PRO_0000147618" description="Fibroblast growth factor 20">
    <location>
        <begin position="1"/>
        <end position="212"/>
    </location>
</feature>
<organism>
    <name type="scientific">Rattus norvegicus</name>
    <name type="common">Rat</name>
    <dbReference type="NCBI Taxonomy" id="10116"/>
    <lineage>
        <taxon>Eukaryota</taxon>
        <taxon>Metazoa</taxon>
        <taxon>Chordata</taxon>
        <taxon>Craniata</taxon>
        <taxon>Vertebrata</taxon>
        <taxon>Euteleostomi</taxon>
        <taxon>Mammalia</taxon>
        <taxon>Eutheria</taxon>
        <taxon>Euarchontoglires</taxon>
        <taxon>Glires</taxon>
        <taxon>Rodentia</taxon>
        <taxon>Myomorpha</taxon>
        <taxon>Muroidea</taxon>
        <taxon>Muridae</taxon>
        <taxon>Murinae</taxon>
        <taxon>Rattus</taxon>
    </lineage>
</organism>
<keyword id="KW-0339">Growth factor</keyword>
<keyword id="KW-1185">Reference proteome</keyword>
<keyword id="KW-0964">Secreted</keyword>
<name>FGF20_RAT</name>
<proteinExistence type="evidence at transcript level"/>